<sequence length="646" mass="68810">MAEPALLDPTAAFDLRLYPAHLFDHELPLAGGGGGDDDDDLPLDGLEFDLPGDFSVEDFLLRSPERDDSGEGSAAGSGPTASPSSSPTTSASNSAVANGSGGEVKHEESDEGRSGGGDPKWSLKRKQASPGPSSDAAKCRRSGDGDVSPSASASRTAVDSDEGGTVCEEEEDERRAARLMRNRESAQLSRQRKKRYVEELEEKVKSMHSVINDLNSRISFVVAENATLRQQLSGGSVNCPPPGVYPPAPIPGMHFPWMPGYAMRPPGSHVPLVPIPRLKPQQPVPSSKVVKKPESKKTVENKSKSKTKTKKVASVSLLGLLLIMLVFGAFIPGFNHNFGMCGQSDNAMFRNFGQSHARVLSVSSQDKSSLNNSDMIGVDVGKMTGNTDGPGKKHQPAHNSSEILPALLYVPRNGKHVKINGNLIIHSVLASEKAVAHKASKDDSDQSARDHKETSVAIARYLSLPGKDVNRQETSSADGPLPQWFREGMEGPILNSGMCSEVFQFDISTASSNPGGIIPASPVVNSSSVNATEKIPAHSAAYHGKLKNRRVMYNEAIPLTGKTANNTEPFNRTSESSSKLPDSKPASSVVVSVLADPREAGNGDGDPRVSPKPLSKIFVVVLVDGVRYVTYSCTLPFKSSSPHLVN</sequence>
<proteinExistence type="evidence at transcript level"/>
<keyword id="KW-0238">DNA-binding</keyword>
<keyword id="KW-0256">Endoplasmic reticulum</keyword>
<keyword id="KW-0325">Glycoprotein</keyword>
<keyword id="KW-0472">Membrane</keyword>
<keyword id="KW-0539">Nucleus</keyword>
<keyword id="KW-1185">Reference proteome</keyword>
<keyword id="KW-0804">Transcription</keyword>
<keyword id="KW-0805">Transcription regulation</keyword>
<keyword id="KW-0812">Transmembrane</keyword>
<keyword id="KW-1133">Transmembrane helix</keyword>
<keyword id="KW-0834">Unfolded protein response</keyword>
<comment type="function">
    <text evidence="5 6">Transcription factor involved in endoplasmic reticulum (ER) stress response. Acts as a ER stress sensor and activates the transcription factor BZIP50 and the chaperone BIP1.</text>
</comment>
<comment type="subcellular location">
    <subcellularLocation>
        <location evidence="6">Endoplasmic reticulum membrane</location>
        <topology evidence="1">Single-pass membrane protein</topology>
    </subcellularLocation>
    <subcellularLocation>
        <location evidence="3 6">Nucleus</location>
    </subcellularLocation>
    <text evidence="6">The bZIP domain is translocated into the nucleus in response to ER stress.</text>
</comment>
<comment type="tissue specificity">
    <text evidence="6">Highly expressed in leaf blade, and at lower levels in roots, leaf sheaths, flowers and seeds.</text>
</comment>
<comment type="induction">
    <text evidence="6">Induced by dithiothreitol- and tunicamycin-induced endoplasmic reticulum (ER) stress response.</text>
</comment>
<comment type="similarity">
    <text evidence="8">Belongs to the bZIP family.</text>
</comment>
<comment type="sequence caution" evidence="8">
    <conflict type="erroneous gene model prediction">
        <sequence resource="EMBL-CDS" id="BAF17451"/>
    </conflict>
</comment>
<comment type="sequence caution" evidence="8">
    <conflict type="erroneous gene model prediction">
        <sequence resource="EMBL-CDS" id="BAS94004"/>
    </conflict>
</comment>
<organism>
    <name type="scientific">Oryza sativa subsp. japonica</name>
    <name type="common">Rice</name>
    <dbReference type="NCBI Taxonomy" id="39947"/>
    <lineage>
        <taxon>Eukaryota</taxon>
        <taxon>Viridiplantae</taxon>
        <taxon>Streptophyta</taxon>
        <taxon>Embryophyta</taxon>
        <taxon>Tracheophyta</taxon>
        <taxon>Spermatophyta</taxon>
        <taxon>Magnoliopsida</taxon>
        <taxon>Liliopsida</taxon>
        <taxon>Poales</taxon>
        <taxon>Poaceae</taxon>
        <taxon>BOP clade</taxon>
        <taxon>Oryzoideae</taxon>
        <taxon>Oryzeae</taxon>
        <taxon>Oryzinae</taxon>
        <taxon>Oryza</taxon>
        <taxon>Oryza sativa</taxon>
    </lineage>
</organism>
<name>BZP39_ORYSJ</name>
<reference key="1">
    <citation type="journal article" date="2005" name="Mol. Genet. Genomics">
        <title>A fine physical map of the rice chromosome 5.</title>
        <authorList>
            <person name="Cheng C.-H."/>
            <person name="Chung M.C."/>
            <person name="Liu S.-M."/>
            <person name="Chen S.-K."/>
            <person name="Kao F.Y."/>
            <person name="Lin S.-J."/>
            <person name="Hsiao S.-H."/>
            <person name="Tseng I.C."/>
            <person name="Hsing Y.-I.C."/>
            <person name="Wu H.-P."/>
            <person name="Chen C.-S."/>
            <person name="Shaw J.-F."/>
            <person name="Wu J."/>
            <person name="Matsumoto T."/>
            <person name="Sasaki T."/>
            <person name="Chen H.-C."/>
            <person name="Chow T.-Y."/>
        </authorList>
    </citation>
    <scope>NUCLEOTIDE SEQUENCE [LARGE SCALE GENOMIC DNA]</scope>
    <source>
        <strain>cv. Nipponbare</strain>
    </source>
</reference>
<reference key="2">
    <citation type="journal article" date="2005" name="Nature">
        <title>The map-based sequence of the rice genome.</title>
        <authorList>
            <consortium name="International rice genome sequencing project (IRGSP)"/>
        </authorList>
    </citation>
    <scope>NUCLEOTIDE SEQUENCE [LARGE SCALE GENOMIC DNA]</scope>
    <source>
        <strain>cv. Nipponbare</strain>
    </source>
</reference>
<reference key="3">
    <citation type="journal article" date="2008" name="Nucleic Acids Res.">
        <title>The rice annotation project database (RAP-DB): 2008 update.</title>
        <authorList>
            <consortium name="The rice annotation project (RAP)"/>
        </authorList>
    </citation>
    <scope>GENOME REANNOTATION</scope>
    <source>
        <strain>cv. Nipponbare</strain>
    </source>
</reference>
<reference key="4">
    <citation type="journal article" date="2013" name="Rice">
        <title>Improvement of the Oryza sativa Nipponbare reference genome using next generation sequence and optical map data.</title>
        <authorList>
            <person name="Kawahara Y."/>
            <person name="de la Bastide M."/>
            <person name="Hamilton J.P."/>
            <person name="Kanamori H."/>
            <person name="McCombie W.R."/>
            <person name="Ouyang S."/>
            <person name="Schwartz D.C."/>
            <person name="Tanaka T."/>
            <person name="Wu J."/>
            <person name="Zhou S."/>
            <person name="Childs K.L."/>
            <person name="Davidson R.M."/>
            <person name="Lin H."/>
            <person name="Quesada-Ocampo L."/>
            <person name="Vaillancourt B."/>
            <person name="Sakai H."/>
            <person name="Lee S.S."/>
            <person name="Kim J."/>
            <person name="Numa H."/>
            <person name="Itoh T."/>
            <person name="Buell C.R."/>
            <person name="Matsumoto T."/>
        </authorList>
    </citation>
    <scope>GENOME REANNOTATION</scope>
    <source>
        <strain>cv. Nipponbare</strain>
    </source>
</reference>
<reference key="5">
    <citation type="journal article" date="2005" name="PLoS Biol.">
        <title>The genomes of Oryza sativa: a history of duplications.</title>
        <authorList>
            <person name="Yu J."/>
            <person name="Wang J."/>
            <person name="Lin W."/>
            <person name="Li S."/>
            <person name="Li H."/>
            <person name="Zhou J."/>
            <person name="Ni P."/>
            <person name="Dong W."/>
            <person name="Hu S."/>
            <person name="Zeng C."/>
            <person name="Zhang J."/>
            <person name="Zhang Y."/>
            <person name="Li R."/>
            <person name="Xu Z."/>
            <person name="Li S."/>
            <person name="Li X."/>
            <person name="Zheng H."/>
            <person name="Cong L."/>
            <person name="Lin L."/>
            <person name="Yin J."/>
            <person name="Geng J."/>
            <person name="Li G."/>
            <person name="Shi J."/>
            <person name="Liu J."/>
            <person name="Lv H."/>
            <person name="Li J."/>
            <person name="Wang J."/>
            <person name="Deng Y."/>
            <person name="Ran L."/>
            <person name="Shi X."/>
            <person name="Wang X."/>
            <person name="Wu Q."/>
            <person name="Li C."/>
            <person name="Ren X."/>
            <person name="Wang J."/>
            <person name="Wang X."/>
            <person name="Li D."/>
            <person name="Liu D."/>
            <person name="Zhang X."/>
            <person name="Ji Z."/>
            <person name="Zhao W."/>
            <person name="Sun Y."/>
            <person name="Zhang Z."/>
            <person name="Bao J."/>
            <person name="Han Y."/>
            <person name="Dong L."/>
            <person name="Ji J."/>
            <person name="Chen P."/>
            <person name="Wu S."/>
            <person name="Liu J."/>
            <person name="Xiao Y."/>
            <person name="Bu D."/>
            <person name="Tan J."/>
            <person name="Yang L."/>
            <person name="Ye C."/>
            <person name="Zhang J."/>
            <person name="Xu J."/>
            <person name="Zhou Y."/>
            <person name="Yu Y."/>
            <person name="Zhang B."/>
            <person name="Zhuang S."/>
            <person name="Wei H."/>
            <person name="Liu B."/>
            <person name="Lei M."/>
            <person name="Yu H."/>
            <person name="Li Y."/>
            <person name="Xu H."/>
            <person name="Wei S."/>
            <person name="He X."/>
            <person name="Fang L."/>
            <person name="Zhang Z."/>
            <person name="Zhang Y."/>
            <person name="Huang X."/>
            <person name="Su Z."/>
            <person name="Tong W."/>
            <person name="Li J."/>
            <person name="Tong Z."/>
            <person name="Li S."/>
            <person name="Ye J."/>
            <person name="Wang L."/>
            <person name="Fang L."/>
            <person name="Lei T."/>
            <person name="Chen C.-S."/>
            <person name="Chen H.-C."/>
            <person name="Xu Z."/>
            <person name="Li H."/>
            <person name="Huang H."/>
            <person name="Zhang F."/>
            <person name="Xu H."/>
            <person name="Li N."/>
            <person name="Zhao C."/>
            <person name="Li S."/>
            <person name="Dong L."/>
            <person name="Huang Y."/>
            <person name="Li L."/>
            <person name="Xi Y."/>
            <person name="Qi Q."/>
            <person name="Li W."/>
            <person name="Zhang B."/>
            <person name="Hu W."/>
            <person name="Zhang Y."/>
            <person name="Tian X."/>
            <person name="Jiao Y."/>
            <person name="Liang X."/>
            <person name="Jin J."/>
            <person name="Gao L."/>
            <person name="Zheng W."/>
            <person name="Hao B."/>
            <person name="Liu S.-M."/>
            <person name="Wang W."/>
            <person name="Yuan L."/>
            <person name="Cao M."/>
            <person name="McDermott J."/>
            <person name="Samudrala R."/>
            <person name="Wang J."/>
            <person name="Wong G.K.-S."/>
            <person name="Yang H."/>
        </authorList>
    </citation>
    <scope>NUCLEOTIDE SEQUENCE [LARGE SCALE GENOMIC DNA]</scope>
    <source>
        <strain>cv. Nipponbare</strain>
    </source>
</reference>
<reference key="6">
    <citation type="journal article" date="2003" name="Science">
        <title>Collection, mapping, and annotation of over 28,000 cDNA clones from japonica rice.</title>
        <authorList>
            <consortium name="The rice full-length cDNA consortium"/>
        </authorList>
    </citation>
    <scope>NUCLEOTIDE SEQUENCE [LARGE SCALE MRNA]</scope>
    <source>
        <strain>cv. Nipponbare</strain>
    </source>
</reference>
<reference key="7">
    <citation type="journal article" date="2008" name="Plant Physiol.">
        <title>Genomic survey and gene expression analysis of the basic leucine zipper transcription factor family in rice.</title>
        <authorList>
            <person name="Nijhawan A."/>
            <person name="Jain M."/>
            <person name="Tyagi A.K."/>
            <person name="Khurana J.P."/>
        </authorList>
    </citation>
    <scope>GENE FAMILY</scope>
    <scope>NOMENCLATURE</scope>
</reference>
<reference key="8">
    <citation type="journal article" date="2012" name="Plant Cell Physiol.">
        <title>A rice transmembrane bZIP transcription factor, OsbZIP39, regulates the endoplasmic reticulum stress response.</title>
        <authorList>
            <person name="Takahashi H."/>
            <person name="Kawakatsu T."/>
            <person name="Wakasa Y."/>
            <person name="Hayashi S."/>
            <person name="Takaiwa F."/>
        </authorList>
    </citation>
    <scope>FUNCTION</scope>
    <scope>SUBCELLULAR LOCATION</scope>
    <scope>TISSUE SPECIFICITY</scope>
    <scope>INDUCTION</scope>
</reference>
<reference key="9">
    <citation type="journal article" date="2012" name="Plant J.">
        <title>Signal transduction by IRE1-mediated splicing of bZIP50 and other stress sensors in the endoplasmic reticulum stress response of rice.</title>
        <authorList>
            <person name="Hayashi S."/>
            <person name="Wakasa Y."/>
            <person name="Takahashi H."/>
            <person name="Kawakatsu T."/>
            <person name="Takaiwa F."/>
        </authorList>
    </citation>
    <scope>FUNCTION</scope>
</reference>
<protein>
    <recommendedName>
        <fullName evidence="7">bZIP transcription factor 39</fullName>
        <shortName evidence="7">OsbZIP39</shortName>
    </recommendedName>
</protein>
<dbReference type="EMBL" id="AC130729">
    <property type="protein sequence ID" value="AAT85257.1"/>
    <property type="molecule type" value="Genomic_DNA"/>
</dbReference>
<dbReference type="EMBL" id="AP008211">
    <property type="protein sequence ID" value="BAF17451.1"/>
    <property type="status" value="ALT_SEQ"/>
    <property type="molecule type" value="Genomic_DNA"/>
</dbReference>
<dbReference type="EMBL" id="AP014961">
    <property type="protein sequence ID" value="BAS94003.1"/>
    <property type="molecule type" value="Genomic_DNA"/>
</dbReference>
<dbReference type="EMBL" id="AP014961">
    <property type="protein sequence ID" value="BAS94004.1"/>
    <property type="status" value="ALT_SEQ"/>
    <property type="molecule type" value="Genomic_DNA"/>
</dbReference>
<dbReference type="EMBL" id="CM000142">
    <property type="protein sequence ID" value="EEE63718.1"/>
    <property type="molecule type" value="Genomic_DNA"/>
</dbReference>
<dbReference type="EMBL" id="AK073142">
    <property type="protein sequence ID" value="BAG93307.1"/>
    <property type="molecule type" value="mRNA"/>
</dbReference>
<dbReference type="RefSeq" id="NP_001389460.1">
    <property type="nucleotide sequence ID" value="NM_001402531.1"/>
</dbReference>
<dbReference type="RefSeq" id="XP_015640085.1">
    <property type="nucleotide sequence ID" value="XM_015784599.1"/>
</dbReference>
<dbReference type="SMR" id="Q6AU90"/>
<dbReference type="FunCoup" id="Q6AU90">
    <property type="interactions" value="2051"/>
</dbReference>
<dbReference type="STRING" id="39947.Q6AU90"/>
<dbReference type="GlyCosmos" id="Q6AU90">
    <property type="glycosylation" value="6 sites, No reported glycans"/>
</dbReference>
<dbReference type="PaxDb" id="39947-Q6AU90"/>
<dbReference type="EnsemblPlants" id="Os05t0411300-01">
    <property type="protein sequence ID" value="Os05t0411300-01"/>
    <property type="gene ID" value="Os05g0411300"/>
</dbReference>
<dbReference type="GeneID" id="4338781"/>
<dbReference type="Gramene" id="Os05t0411300-01">
    <property type="protein sequence ID" value="Os05t0411300-01"/>
    <property type="gene ID" value="Os05g0411300"/>
</dbReference>
<dbReference type="KEGG" id="dosa:Os05g0411300"/>
<dbReference type="eggNOG" id="ENOG502QQUV">
    <property type="taxonomic scope" value="Eukaryota"/>
</dbReference>
<dbReference type="HOGENOM" id="CLU_018118_2_0_1"/>
<dbReference type="InParanoid" id="Q6AU90"/>
<dbReference type="OMA" id="FNHNFGM"/>
<dbReference type="OrthoDB" id="295274at2759"/>
<dbReference type="Proteomes" id="UP000000763">
    <property type="component" value="Chromosome 5"/>
</dbReference>
<dbReference type="Proteomes" id="UP000007752">
    <property type="component" value="Chromosome 5"/>
</dbReference>
<dbReference type="Proteomes" id="UP000059680">
    <property type="component" value="Chromosome 5"/>
</dbReference>
<dbReference type="GO" id="GO:0005789">
    <property type="term" value="C:endoplasmic reticulum membrane"/>
    <property type="evidence" value="ECO:0000314"/>
    <property type="project" value="UniProtKB"/>
</dbReference>
<dbReference type="GO" id="GO:0005634">
    <property type="term" value="C:nucleus"/>
    <property type="evidence" value="ECO:0000314"/>
    <property type="project" value="UniProtKB"/>
</dbReference>
<dbReference type="GO" id="GO:0003677">
    <property type="term" value="F:DNA binding"/>
    <property type="evidence" value="ECO:0007669"/>
    <property type="project" value="UniProtKB-KW"/>
</dbReference>
<dbReference type="GO" id="GO:0003700">
    <property type="term" value="F:DNA-binding transcription factor activity"/>
    <property type="evidence" value="ECO:0007669"/>
    <property type="project" value="InterPro"/>
</dbReference>
<dbReference type="GO" id="GO:0034976">
    <property type="term" value="P:response to endoplasmic reticulum stress"/>
    <property type="evidence" value="ECO:0000315"/>
    <property type="project" value="UniProtKB"/>
</dbReference>
<dbReference type="GO" id="GO:0006986">
    <property type="term" value="P:response to unfolded protein"/>
    <property type="evidence" value="ECO:0007669"/>
    <property type="project" value="UniProtKB-KW"/>
</dbReference>
<dbReference type="CDD" id="cd14704">
    <property type="entry name" value="bZIP_HY5-like"/>
    <property type="match status" value="1"/>
</dbReference>
<dbReference type="FunFam" id="1.20.5.170:FF:000085">
    <property type="entry name" value="bZIP transcription factor 49"/>
    <property type="match status" value="1"/>
</dbReference>
<dbReference type="Gene3D" id="1.20.5.170">
    <property type="match status" value="1"/>
</dbReference>
<dbReference type="InterPro" id="IPR004827">
    <property type="entry name" value="bZIP"/>
</dbReference>
<dbReference type="InterPro" id="IPR046347">
    <property type="entry name" value="bZIP_sf"/>
</dbReference>
<dbReference type="PANTHER" id="PTHR47416">
    <property type="entry name" value="BASIC-LEUCINE ZIPPER TRANSCRIPTION FACTOR F-RELATED"/>
    <property type="match status" value="1"/>
</dbReference>
<dbReference type="PANTHER" id="PTHR47416:SF3">
    <property type="entry name" value="BZIP TRANSCRIPTION FACTOR 17-RELATED"/>
    <property type="match status" value="1"/>
</dbReference>
<dbReference type="Pfam" id="PF00170">
    <property type="entry name" value="bZIP_1"/>
    <property type="match status" value="1"/>
</dbReference>
<dbReference type="SMART" id="SM00338">
    <property type="entry name" value="BRLZ"/>
    <property type="match status" value="1"/>
</dbReference>
<dbReference type="SUPFAM" id="SSF57959">
    <property type="entry name" value="Leucine zipper domain"/>
    <property type="match status" value="1"/>
</dbReference>
<dbReference type="PROSITE" id="PS50217">
    <property type="entry name" value="BZIP"/>
    <property type="match status" value="1"/>
</dbReference>
<gene>
    <name evidence="7" type="primary">BZIP39</name>
    <name evidence="10" type="ordered locus">Os05g0411300</name>
    <name evidence="8" type="ordered locus">LOC_Os05g34050</name>
    <name evidence="11" type="ORF">OsJ_18536</name>
    <name evidence="9" type="ORF">P0668F02.11</name>
</gene>
<feature type="chain" id="PRO_0000438368" description="bZIP transcription factor 39">
    <location>
        <begin position="1"/>
        <end position="646"/>
    </location>
</feature>
<feature type="topological domain" description="Cytoplasmic" evidence="8">
    <location>
        <begin position="1"/>
        <end position="311"/>
    </location>
</feature>
<feature type="transmembrane region" description="Helical" evidence="1">
    <location>
        <begin position="312"/>
        <end position="332"/>
    </location>
</feature>
<feature type="topological domain" description="Lumenal" evidence="8">
    <location>
        <begin position="333"/>
        <end position="646"/>
    </location>
</feature>
<feature type="domain" description="bZIP" evidence="3">
    <location>
        <begin position="172"/>
        <end position="232"/>
    </location>
</feature>
<feature type="region of interest" description="Disordered" evidence="4">
    <location>
        <begin position="25"/>
        <end position="172"/>
    </location>
</feature>
<feature type="region of interest" description="Basic motif" evidence="3">
    <location>
        <begin position="174"/>
        <end position="205"/>
    </location>
</feature>
<feature type="region of interest" description="Leucine-zipper" evidence="3">
    <location>
        <begin position="211"/>
        <end position="218"/>
    </location>
</feature>
<feature type="region of interest" description="Disordered" evidence="4">
    <location>
        <begin position="272"/>
        <end position="308"/>
    </location>
</feature>
<feature type="region of interest" description="Disordered" evidence="4">
    <location>
        <begin position="560"/>
        <end position="585"/>
    </location>
</feature>
<feature type="compositionally biased region" description="Low complexity" evidence="4">
    <location>
        <begin position="43"/>
        <end position="53"/>
    </location>
</feature>
<feature type="compositionally biased region" description="Basic and acidic residues" evidence="4">
    <location>
        <begin position="59"/>
        <end position="69"/>
    </location>
</feature>
<feature type="compositionally biased region" description="Low complexity" evidence="4">
    <location>
        <begin position="71"/>
        <end position="98"/>
    </location>
</feature>
<feature type="compositionally biased region" description="Basic and acidic residues" evidence="4">
    <location>
        <begin position="103"/>
        <end position="113"/>
    </location>
</feature>
<feature type="compositionally biased region" description="Acidic residues" evidence="4">
    <location>
        <begin position="159"/>
        <end position="172"/>
    </location>
</feature>
<feature type="compositionally biased region" description="Low complexity" evidence="4">
    <location>
        <begin position="279"/>
        <end position="288"/>
    </location>
</feature>
<feature type="compositionally biased region" description="Basic and acidic residues" evidence="4">
    <location>
        <begin position="291"/>
        <end position="303"/>
    </location>
</feature>
<feature type="compositionally biased region" description="Polar residues" evidence="4">
    <location>
        <begin position="562"/>
        <end position="585"/>
    </location>
</feature>
<feature type="glycosylation site" description="N-linked (GlcNAc...) asparagine" evidence="2">
    <location>
        <position position="371"/>
    </location>
</feature>
<feature type="glycosylation site" description="N-linked (GlcNAc...) asparagine" evidence="2">
    <location>
        <position position="399"/>
    </location>
</feature>
<feature type="glycosylation site" description="N-linked (GlcNAc...) asparagine" evidence="2">
    <location>
        <position position="525"/>
    </location>
</feature>
<feature type="glycosylation site" description="N-linked (GlcNAc...) asparagine" evidence="2">
    <location>
        <position position="530"/>
    </location>
</feature>
<feature type="glycosylation site" description="N-linked (GlcNAc...) asparagine" evidence="2">
    <location>
        <position position="565"/>
    </location>
</feature>
<feature type="glycosylation site" description="N-linked (GlcNAc...) asparagine" evidence="2">
    <location>
        <position position="571"/>
    </location>
</feature>
<accession>Q6AU90</accession>
<accession>Q0DI72</accession>
<evidence type="ECO:0000255" key="1"/>
<evidence type="ECO:0000255" key="2">
    <source>
        <dbReference type="PROSITE-ProRule" id="PRU00498"/>
    </source>
</evidence>
<evidence type="ECO:0000255" key="3">
    <source>
        <dbReference type="PROSITE-ProRule" id="PRU00978"/>
    </source>
</evidence>
<evidence type="ECO:0000256" key="4">
    <source>
        <dbReference type="SAM" id="MobiDB-lite"/>
    </source>
</evidence>
<evidence type="ECO:0000269" key="5">
    <source>
    </source>
</evidence>
<evidence type="ECO:0000269" key="6">
    <source>
    </source>
</evidence>
<evidence type="ECO:0000303" key="7">
    <source>
    </source>
</evidence>
<evidence type="ECO:0000305" key="8"/>
<evidence type="ECO:0000312" key="9">
    <source>
        <dbReference type="EMBL" id="AAT85257.1"/>
    </source>
</evidence>
<evidence type="ECO:0000312" key="10">
    <source>
        <dbReference type="EMBL" id="BAS94003.1"/>
    </source>
</evidence>
<evidence type="ECO:0000312" key="11">
    <source>
        <dbReference type="EMBL" id="EEE63718.1"/>
    </source>
</evidence>